<gene>
    <name evidence="1" type="primary">hldD</name>
    <name type="ordered locus">Daro_1286</name>
</gene>
<dbReference type="EC" id="5.1.3.20" evidence="1"/>
<dbReference type="EMBL" id="CP000089">
    <property type="protein sequence ID" value="AAZ46038.1"/>
    <property type="molecule type" value="Genomic_DNA"/>
</dbReference>
<dbReference type="SMR" id="Q47GJ3"/>
<dbReference type="STRING" id="159087.Daro_1286"/>
<dbReference type="KEGG" id="dar:Daro_1286"/>
<dbReference type="eggNOG" id="COG0451">
    <property type="taxonomic scope" value="Bacteria"/>
</dbReference>
<dbReference type="HOGENOM" id="CLU_007383_1_3_4"/>
<dbReference type="OrthoDB" id="9803010at2"/>
<dbReference type="UniPathway" id="UPA00356">
    <property type="reaction ID" value="UER00440"/>
</dbReference>
<dbReference type="GO" id="GO:0008712">
    <property type="term" value="F:ADP-glyceromanno-heptose 6-epimerase activity"/>
    <property type="evidence" value="ECO:0007669"/>
    <property type="project" value="UniProtKB-UniRule"/>
</dbReference>
<dbReference type="GO" id="GO:0050661">
    <property type="term" value="F:NADP binding"/>
    <property type="evidence" value="ECO:0007669"/>
    <property type="project" value="InterPro"/>
</dbReference>
<dbReference type="GO" id="GO:0097171">
    <property type="term" value="P:ADP-L-glycero-beta-D-manno-heptose biosynthetic process"/>
    <property type="evidence" value="ECO:0007669"/>
    <property type="project" value="UniProtKB-UniPathway"/>
</dbReference>
<dbReference type="GO" id="GO:0005975">
    <property type="term" value="P:carbohydrate metabolic process"/>
    <property type="evidence" value="ECO:0007669"/>
    <property type="project" value="UniProtKB-UniRule"/>
</dbReference>
<dbReference type="CDD" id="cd05248">
    <property type="entry name" value="ADP_GME_SDR_e"/>
    <property type="match status" value="1"/>
</dbReference>
<dbReference type="Gene3D" id="3.40.50.720">
    <property type="entry name" value="NAD(P)-binding Rossmann-like Domain"/>
    <property type="match status" value="1"/>
</dbReference>
<dbReference type="Gene3D" id="3.90.25.10">
    <property type="entry name" value="UDP-galactose 4-epimerase, domain 1"/>
    <property type="match status" value="1"/>
</dbReference>
<dbReference type="HAMAP" id="MF_01601">
    <property type="entry name" value="Heptose_epimerase"/>
    <property type="match status" value="1"/>
</dbReference>
<dbReference type="InterPro" id="IPR001509">
    <property type="entry name" value="Epimerase_deHydtase"/>
</dbReference>
<dbReference type="InterPro" id="IPR011912">
    <property type="entry name" value="Heptose_epim"/>
</dbReference>
<dbReference type="InterPro" id="IPR036291">
    <property type="entry name" value="NAD(P)-bd_dom_sf"/>
</dbReference>
<dbReference type="NCBIfam" id="TIGR02197">
    <property type="entry name" value="heptose_epim"/>
    <property type="match status" value="1"/>
</dbReference>
<dbReference type="PANTHER" id="PTHR43103:SF3">
    <property type="entry name" value="ADP-L-GLYCERO-D-MANNO-HEPTOSE-6-EPIMERASE"/>
    <property type="match status" value="1"/>
</dbReference>
<dbReference type="PANTHER" id="PTHR43103">
    <property type="entry name" value="NUCLEOSIDE-DIPHOSPHATE-SUGAR EPIMERASE"/>
    <property type="match status" value="1"/>
</dbReference>
<dbReference type="Pfam" id="PF01370">
    <property type="entry name" value="Epimerase"/>
    <property type="match status" value="1"/>
</dbReference>
<dbReference type="SUPFAM" id="SSF51735">
    <property type="entry name" value="NAD(P)-binding Rossmann-fold domains"/>
    <property type="match status" value="1"/>
</dbReference>
<sequence>MYIVVTGAAGFIGSNIVKALNERGITNIIAVDNLTKADKFKNLIDCDIVDYLDKNDFIERIQAGHFDGEIDAILHEGACSDTMETDGRYMMENNYRYSMILLDWCLDQDVQFLYASSAATYGSSGTFKEERQYEGPLNVYGYSKFLFDQIVRQRLAQNPSSQIVGFRYFNVYGPRETHKGRMASVAFHNFNQFRADGKVKLFEGSHGYPDGDQQRDFVFVGDVAKVNLFFLDHPEKSGIFNLGSGRAQSFNDVAVAAVNGCRKARSESALSLEELRAQGLLEYVAFPEALKGKYQAFTQADLGKLRAAGYDAPMATVEEGVSQYIEWLQRNV</sequence>
<proteinExistence type="inferred from homology"/>
<reference key="1">
    <citation type="journal article" date="2009" name="BMC Genomics">
        <title>Metabolic analysis of the soil microbe Dechloromonas aromatica str. RCB: indications of a surprisingly complex life-style and cryptic anaerobic pathways for aromatic degradation.</title>
        <authorList>
            <person name="Salinero K.K."/>
            <person name="Keller K."/>
            <person name="Feil W.S."/>
            <person name="Feil H."/>
            <person name="Trong S."/>
            <person name="Di Bartolo G."/>
            <person name="Lapidus A."/>
        </authorList>
    </citation>
    <scope>NUCLEOTIDE SEQUENCE [LARGE SCALE GENOMIC DNA]</scope>
    <source>
        <strain>RCB</strain>
    </source>
</reference>
<protein>
    <recommendedName>
        <fullName evidence="1">ADP-L-glycero-D-manno-heptose-6-epimerase</fullName>
        <ecNumber evidence="1">5.1.3.20</ecNumber>
    </recommendedName>
    <alternativeName>
        <fullName evidence="1">ADP-L-glycero-beta-D-manno-heptose-6-epimerase</fullName>
        <shortName evidence="1">ADP-glyceromanno-heptose 6-epimerase</shortName>
        <shortName evidence="1">ADP-hep 6-epimerase</shortName>
        <shortName evidence="1">AGME</shortName>
    </alternativeName>
</protein>
<feature type="chain" id="PRO_0000255727" description="ADP-L-glycero-D-manno-heptose-6-epimerase">
    <location>
        <begin position="1"/>
        <end position="332"/>
    </location>
</feature>
<feature type="active site" description="Proton acceptor" evidence="1">
    <location>
        <position position="140"/>
    </location>
</feature>
<feature type="active site" description="Proton acceptor" evidence="1">
    <location>
        <position position="179"/>
    </location>
</feature>
<feature type="binding site" evidence="1">
    <location>
        <begin position="11"/>
        <end position="12"/>
    </location>
    <ligand>
        <name>NADP(+)</name>
        <dbReference type="ChEBI" id="CHEBI:58349"/>
    </ligand>
</feature>
<feature type="binding site" evidence="1">
    <location>
        <begin position="32"/>
        <end position="33"/>
    </location>
    <ligand>
        <name>NADP(+)</name>
        <dbReference type="ChEBI" id="CHEBI:58349"/>
    </ligand>
</feature>
<feature type="binding site" evidence="1">
    <location>
        <position position="39"/>
    </location>
    <ligand>
        <name>NADP(+)</name>
        <dbReference type="ChEBI" id="CHEBI:58349"/>
    </ligand>
</feature>
<feature type="binding site" evidence="1">
    <location>
        <position position="54"/>
    </location>
    <ligand>
        <name>NADP(+)</name>
        <dbReference type="ChEBI" id="CHEBI:58349"/>
    </ligand>
</feature>
<feature type="binding site" evidence="1">
    <location>
        <begin position="76"/>
        <end position="80"/>
    </location>
    <ligand>
        <name>NADP(+)</name>
        <dbReference type="ChEBI" id="CHEBI:58349"/>
    </ligand>
</feature>
<feature type="binding site" evidence="1">
    <location>
        <position position="93"/>
    </location>
    <ligand>
        <name>NADP(+)</name>
        <dbReference type="ChEBI" id="CHEBI:58349"/>
    </ligand>
</feature>
<feature type="binding site" evidence="1">
    <location>
        <position position="144"/>
    </location>
    <ligand>
        <name>NADP(+)</name>
        <dbReference type="ChEBI" id="CHEBI:58349"/>
    </ligand>
</feature>
<feature type="binding site" evidence="1">
    <location>
        <position position="170"/>
    </location>
    <ligand>
        <name>substrate</name>
    </ligand>
</feature>
<feature type="binding site" evidence="1">
    <location>
        <position position="171"/>
    </location>
    <ligand>
        <name>NADP(+)</name>
        <dbReference type="ChEBI" id="CHEBI:58349"/>
    </ligand>
</feature>
<feature type="binding site" evidence="1">
    <location>
        <position position="179"/>
    </location>
    <ligand>
        <name>NADP(+)</name>
        <dbReference type="ChEBI" id="CHEBI:58349"/>
    </ligand>
</feature>
<feature type="binding site" evidence="1">
    <location>
        <position position="181"/>
    </location>
    <ligand>
        <name>substrate</name>
    </ligand>
</feature>
<feature type="binding site" evidence="1">
    <location>
        <position position="188"/>
    </location>
    <ligand>
        <name>substrate</name>
    </ligand>
</feature>
<feature type="binding site" evidence="1">
    <location>
        <begin position="202"/>
        <end position="205"/>
    </location>
    <ligand>
        <name>substrate</name>
    </ligand>
</feature>
<feature type="binding site" evidence="1">
    <location>
        <position position="215"/>
    </location>
    <ligand>
        <name>substrate</name>
    </ligand>
</feature>
<feature type="binding site" evidence="1">
    <location>
        <position position="294"/>
    </location>
    <ligand>
        <name>substrate</name>
    </ligand>
</feature>
<comment type="function">
    <text evidence="1">Catalyzes the interconversion between ADP-D-glycero-beta-D-manno-heptose and ADP-L-glycero-beta-D-manno-heptose via an epimerization at carbon 6 of the heptose.</text>
</comment>
<comment type="catalytic activity">
    <reaction evidence="1">
        <text>ADP-D-glycero-beta-D-manno-heptose = ADP-L-glycero-beta-D-manno-heptose</text>
        <dbReference type="Rhea" id="RHEA:17577"/>
        <dbReference type="ChEBI" id="CHEBI:59967"/>
        <dbReference type="ChEBI" id="CHEBI:61506"/>
        <dbReference type="EC" id="5.1.3.20"/>
    </reaction>
</comment>
<comment type="cofactor">
    <cofactor evidence="1">
        <name>NADP(+)</name>
        <dbReference type="ChEBI" id="CHEBI:58349"/>
    </cofactor>
    <text evidence="1">Binds 1 NADP(+) per subunit.</text>
</comment>
<comment type="pathway">
    <text evidence="1">Nucleotide-sugar biosynthesis; ADP-L-glycero-beta-D-manno-heptose biosynthesis; ADP-L-glycero-beta-D-manno-heptose from D-glycero-beta-D-manno-heptose 7-phosphate: step 4/4.</text>
</comment>
<comment type="subunit">
    <text evidence="1">Homopentamer.</text>
</comment>
<comment type="domain">
    <text evidence="1">Contains a large N-terminal NADP-binding domain, and a smaller C-terminal substrate-binding domain.</text>
</comment>
<comment type="similarity">
    <text evidence="1">Belongs to the NAD(P)-dependent epimerase/dehydratase family. HldD subfamily.</text>
</comment>
<keyword id="KW-0119">Carbohydrate metabolism</keyword>
<keyword id="KW-0413">Isomerase</keyword>
<keyword id="KW-0521">NADP</keyword>
<evidence type="ECO:0000255" key="1">
    <source>
        <dbReference type="HAMAP-Rule" id="MF_01601"/>
    </source>
</evidence>
<organism>
    <name type="scientific">Dechloromonas aromatica (strain RCB)</name>
    <dbReference type="NCBI Taxonomy" id="159087"/>
    <lineage>
        <taxon>Bacteria</taxon>
        <taxon>Pseudomonadati</taxon>
        <taxon>Pseudomonadota</taxon>
        <taxon>Betaproteobacteria</taxon>
        <taxon>Rhodocyclales</taxon>
        <taxon>Azonexaceae</taxon>
        <taxon>Dechloromonas</taxon>
    </lineage>
</organism>
<name>HLDD_DECAR</name>
<accession>Q47GJ3</accession>